<sequence length="636" mass="69365">MSSIAQKNRNYFLYIFYGRIFNSSDKTFFIIKKQLVIAPNFFSVDQKLICSSELFCGTACSRSLVVLYENYKKIVILNSPQFFAGLDSGRENQSPDGSVQGNGLKWMLFLCQKSKRTIFSNHSNLFQCPSVAIVLVLALVILGVLAAIPLTLMLTSSAQKMSTDSTDLTDYSIRHPKFWPKTDKIHFDDLGGIPMSSMFPPNVSTCSGFGFACTGAVHMVIPSSKRCDGFKDCQDGSDEENCKECQSVFSCRSHIEEDSKKKRKTKVQPTLICLTAERLCNGVQDCLDGSDEAMCKSTCSKDQFKCNGSNACLPLSAKCDGVKDCSDGSDENNCNKCQKGAHVSLVSRNIKHLFASHVCDGVAQCADRSDEQQCDCKTCSGSDKALCDDGTCIKRSQVCDGKKDCSDGMDEENCPGTCSIEAFATKVKRVTCSDGKDYTESEACSGVEESCGGSCSKCHPKLTFTCPAAGNAQKKCIKRSKVCDGIFDCDDGADEKNCTPVKECGIDNASQFTCDRKCVDASRRCDGVWDCEDKSDEQNCSQCASGSIKCSADKKCLPAYTRCNGVAECSDGSDELKCSCEECLGAHSNTYMCSESNRCLKRDEVCSPYSMCPNATYTDKAYCAALVLKNSGRFPY</sequence>
<reference evidence="8" key="1">
    <citation type="journal article" date="2003" name="PLoS Biol.">
        <title>The genome sequence of Caenorhabditis briggsae: a platform for comparative genomics.</title>
        <authorList>
            <person name="Stein L.D."/>
            <person name="Bao Z."/>
            <person name="Blasiar D."/>
            <person name="Blumenthal T."/>
            <person name="Brent M.R."/>
            <person name="Chen N."/>
            <person name="Chinwalla A."/>
            <person name="Clarke L."/>
            <person name="Clee C."/>
            <person name="Coghlan A."/>
            <person name="Coulson A."/>
            <person name="D'Eustachio P."/>
            <person name="Fitch D.H.A."/>
            <person name="Fulton L.A."/>
            <person name="Fulton R.E."/>
            <person name="Griffiths-Jones S."/>
            <person name="Harris T.W."/>
            <person name="Hillier L.W."/>
            <person name="Kamath R."/>
            <person name="Kuwabara P.E."/>
            <person name="Mardis E.R."/>
            <person name="Marra M.A."/>
            <person name="Miner T.L."/>
            <person name="Minx P."/>
            <person name="Mullikin J.C."/>
            <person name="Plumb R.W."/>
            <person name="Rogers J."/>
            <person name="Schein J.E."/>
            <person name="Sohrmann M."/>
            <person name="Spieth J."/>
            <person name="Stajich J.E."/>
            <person name="Wei C."/>
            <person name="Willey D."/>
            <person name="Wilson R.K."/>
            <person name="Durbin R.M."/>
            <person name="Waterston R.H."/>
        </authorList>
    </citation>
    <scope>NUCLEOTIDE SEQUENCE [LARGE SCALE GENOMIC DNA]</scope>
    <source>
        <strain evidence="8">AF16</strain>
    </source>
</reference>
<reference evidence="7" key="2">
    <citation type="journal article" date="2005" name="Curr. Biol.">
        <title>The egg surface LDL receptor repeat-containing proteins EGG-1 and EGG-2 are required for fertilization in Caenorhabditis elegans.</title>
        <authorList>
            <person name="Kadandale P."/>
            <person name="Stewart-Michaelis A."/>
            <person name="Gordon S."/>
            <person name="Rubin J."/>
            <person name="Klancer R."/>
            <person name="Schweinsberg P."/>
            <person name="Grant B.D."/>
            <person name="Singson A."/>
        </authorList>
    </citation>
    <scope>FUNCTION</scope>
    <scope>DISRUPTION PHENOTYPE</scope>
</reference>
<gene>
    <name evidence="9" type="primary">egg-1</name>
    <name evidence="9" type="ORF">CBG08534</name>
</gene>
<organism evidence="8">
    <name type="scientific">Caenorhabditis briggsae</name>
    <dbReference type="NCBI Taxonomy" id="6238"/>
    <lineage>
        <taxon>Eukaryota</taxon>
        <taxon>Metazoa</taxon>
        <taxon>Ecdysozoa</taxon>
        <taxon>Nematoda</taxon>
        <taxon>Chromadorea</taxon>
        <taxon>Rhabditida</taxon>
        <taxon>Rhabditina</taxon>
        <taxon>Rhabditomorpha</taxon>
        <taxon>Rhabditoidea</taxon>
        <taxon>Rhabditidae</taxon>
        <taxon>Peloderinae</taxon>
        <taxon>Caenorhabditis</taxon>
    </lineage>
</organism>
<keyword id="KW-1003">Cell membrane</keyword>
<keyword id="KW-0217">Developmental protein</keyword>
<keyword id="KW-1015">Disulfide bond</keyword>
<keyword id="KW-0278">Fertilization</keyword>
<keyword id="KW-0325">Glycoprotein</keyword>
<keyword id="KW-0472">Membrane</keyword>
<keyword id="KW-0675">Receptor</keyword>
<keyword id="KW-1185">Reference proteome</keyword>
<keyword id="KW-0677">Repeat</keyword>
<keyword id="KW-0735">Signal-anchor</keyword>
<keyword id="KW-0812">Transmembrane</keyword>
<keyword id="KW-1133">Transmembrane helix</keyword>
<feature type="chain" id="PRO_0000442793" description="LDL receptor repeat-containing protein egg-1">
    <location>
        <begin position="1"/>
        <end position="636"/>
    </location>
</feature>
<feature type="topological domain" description="Cytoplasmic" evidence="1">
    <location>
        <begin position="1"/>
        <end position="130"/>
    </location>
</feature>
<feature type="transmembrane region" description="Helical; Signal-anchor for type II membrane protein" evidence="2">
    <location>
        <begin position="131"/>
        <end position="151"/>
    </location>
</feature>
<feature type="topological domain" description="Extracellular" evidence="1">
    <location>
        <begin position="152"/>
        <end position="636"/>
    </location>
</feature>
<feature type="domain" description="LDL-receptor class A 1" evidence="3">
    <location>
        <begin position="205"/>
        <end position="243"/>
    </location>
</feature>
<feature type="domain" description="LDL-receptor class A 2" evidence="3">
    <location>
        <begin position="244"/>
        <end position="296"/>
    </location>
</feature>
<feature type="domain" description="LDL-receptor class A 3" evidence="3">
    <location>
        <begin position="298"/>
        <end position="335"/>
    </location>
</feature>
<feature type="domain" description="LDL-receptor class A 4" evidence="3">
    <location>
        <begin position="336"/>
        <end position="375"/>
    </location>
</feature>
<feature type="domain" description="LDL-receptor class A 5" evidence="3">
    <location>
        <begin position="378"/>
        <end position="415"/>
    </location>
</feature>
<feature type="domain" description="LDL-receptor class A 6" evidence="3">
    <location>
        <begin position="457"/>
        <end position="499"/>
    </location>
</feature>
<feature type="domain" description="LDL-receptor class A 7" evidence="3">
    <location>
        <begin position="503"/>
        <end position="541"/>
    </location>
</feature>
<feature type="domain" description="LDL-receptor class A 8" evidence="3">
    <location>
        <begin position="542"/>
        <end position="579"/>
    </location>
</feature>
<feature type="glycosylation site" description="N-linked (GlcNAc...) asparagine" evidence="4">
    <location>
        <position position="202"/>
    </location>
</feature>
<feature type="glycosylation site" description="N-linked (GlcNAc...) asparagine" evidence="4">
    <location>
        <position position="508"/>
    </location>
</feature>
<feature type="glycosylation site" description="N-linked (GlcNAc...) asparagine" evidence="4">
    <location>
        <position position="614"/>
    </location>
</feature>
<feature type="disulfide bond" evidence="3">
    <location>
        <begin position="213"/>
        <end position="233"/>
    </location>
</feature>
<feature type="disulfide bond" evidence="3">
    <location>
        <begin position="227"/>
        <end position="242"/>
    </location>
</feature>
<feature type="disulfide bond" evidence="3">
    <location>
        <begin position="245"/>
        <end position="273"/>
    </location>
</feature>
<feature type="disulfide bond" evidence="3">
    <location>
        <begin position="251"/>
        <end position="286"/>
    </location>
</feature>
<feature type="disulfide bond" evidence="3">
    <location>
        <begin position="280"/>
        <end position="295"/>
    </location>
</feature>
<feature type="disulfide bond" evidence="3">
    <location>
        <begin position="299"/>
        <end position="312"/>
    </location>
</feature>
<feature type="disulfide bond" evidence="3">
    <location>
        <begin position="306"/>
        <end position="325"/>
    </location>
</feature>
<feature type="disulfide bond" evidence="3">
    <location>
        <begin position="319"/>
        <end position="334"/>
    </location>
</feature>
<feature type="disulfide bond" evidence="3">
    <location>
        <begin position="337"/>
        <end position="365"/>
    </location>
</feature>
<feature type="disulfide bond" evidence="3">
    <location>
        <begin position="359"/>
        <end position="374"/>
    </location>
</feature>
<feature type="disulfide bond" evidence="3">
    <location>
        <begin position="379"/>
        <end position="392"/>
    </location>
</feature>
<feature type="disulfide bond" evidence="3">
    <location>
        <begin position="387"/>
        <end position="405"/>
    </location>
</feature>
<feature type="disulfide bond" evidence="3">
    <location>
        <begin position="399"/>
        <end position="414"/>
    </location>
</feature>
<feature type="disulfide bond" evidence="3">
    <location>
        <begin position="458"/>
        <end position="476"/>
    </location>
</feature>
<feature type="disulfide bond" evidence="3">
    <location>
        <begin position="466"/>
        <end position="489"/>
    </location>
</feature>
<feature type="disulfide bond" evidence="3">
    <location>
        <begin position="483"/>
        <end position="498"/>
    </location>
</feature>
<feature type="disulfide bond" evidence="3">
    <location>
        <begin position="504"/>
        <end position="518"/>
    </location>
</feature>
<feature type="disulfide bond" evidence="3">
    <location>
        <begin position="514"/>
        <end position="531"/>
    </location>
</feature>
<feature type="disulfide bond" evidence="3">
    <location>
        <begin position="525"/>
        <end position="540"/>
    </location>
</feature>
<feature type="disulfide bond" evidence="3">
    <location>
        <begin position="543"/>
        <end position="556"/>
    </location>
</feature>
<feature type="disulfide bond" evidence="3">
    <location>
        <begin position="550"/>
        <end position="569"/>
    </location>
</feature>
<feature type="disulfide bond" evidence="3">
    <location>
        <begin position="563"/>
        <end position="578"/>
    </location>
</feature>
<name>EGG1_CAEBR</name>
<evidence type="ECO:0000250" key="1">
    <source>
        <dbReference type="UniProtKB" id="Q09967"/>
    </source>
</evidence>
<evidence type="ECO:0000255" key="2"/>
<evidence type="ECO:0000255" key="3">
    <source>
        <dbReference type="PROSITE-ProRule" id="PRU00124"/>
    </source>
</evidence>
<evidence type="ECO:0000255" key="4">
    <source>
        <dbReference type="PROSITE-ProRule" id="PRU00498"/>
    </source>
</evidence>
<evidence type="ECO:0000269" key="5">
    <source>
    </source>
</evidence>
<evidence type="ECO:0000303" key="6">
    <source>
    </source>
</evidence>
<evidence type="ECO:0000305" key="7"/>
<evidence type="ECO:0000312" key="8">
    <source>
        <dbReference type="Proteomes" id="UP000008549"/>
    </source>
</evidence>
<evidence type="ECO:0000312" key="9">
    <source>
        <dbReference type="WormBase" id="CBG08534"/>
    </source>
</evidence>
<protein>
    <recommendedName>
        <fullName evidence="6">LDL receptor repeat-containing protein egg-1</fullName>
    </recommendedName>
</protein>
<proteinExistence type="inferred from homology"/>
<accession>A8X765</accession>
<comment type="function">
    <text evidence="1 5">Probable receptor which is required for the oocyte-to-zygote transition although its exact function is controversial (By similarity). Seems to be required for fertilization probably by promoting the interaction or fusion between sperm and oocyte (PubMed:16360684). Conversely, shown to be dispensable for fertilization but required for the formation of a continuous and cohesive eggshell chitin layer by maintaining a homogenous distribution of chitin synthase chs-1 at the unfertilized oocyte cell membrane (By similarity). Appears to recruit or maintain together to the unfertilized oocyte cortex several proteins including chs-1, kinase mbk-2 and pseudophosphatases egg-3, and possibly egg-4 and egg-5 (By similarity).</text>
</comment>
<comment type="subcellular location">
    <subcellularLocation>
        <location evidence="1">Cell membrane</location>
        <topology evidence="1">Single-pass type II membrane protein</topology>
    </subcellularLocation>
    <text evidence="1">Localizes to the cell membrane of developing oocytes. Plasma membrane localization requires extracellular matrix protein cbd-1. After fertilization, localizes to endosomes in zygotes.</text>
</comment>
<comment type="disruption phenotype">
    <text evidence="5">RNAi-mediated knockdown results in sterility due to the loss of oocyte fertilization.</text>
</comment>
<dbReference type="EMBL" id="HE601197">
    <property type="protein sequence ID" value="CAP28476.2"/>
    <property type="molecule type" value="Genomic_DNA"/>
</dbReference>
<dbReference type="FunCoup" id="A8X765">
    <property type="interactions" value="85"/>
</dbReference>
<dbReference type="STRING" id="6238.A8X765"/>
<dbReference type="GlyCosmos" id="A8X765">
    <property type="glycosylation" value="3 sites, No reported glycans"/>
</dbReference>
<dbReference type="WormBase" id="CBG08534">
    <property type="protein sequence ID" value="CBP08034"/>
    <property type="gene ID" value="WBGene00030306"/>
    <property type="gene designation" value="Cbr-egg-1"/>
</dbReference>
<dbReference type="eggNOG" id="KOG1215">
    <property type="taxonomic scope" value="Eukaryota"/>
</dbReference>
<dbReference type="HOGENOM" id="CLU_021811_0_0_1"/>
<dbReference type="InParanoid" id="A8X765"/>
<dbReference type="OMA" id="NDGWCIP"/>
<dbReference type="Proteomes" id="UP000008549">
    <property type="component" value="Unassembled WGS sequence"/>
</dbReference>
<dbReference type="GO" id="GO:0005886">
    <property type="term" value="C:plasma membrane"/>
    <property type="evidence" value="ECO:0000318"/>
    <property type="project" value="GO_Central"/>
</dbReference>
<dbReference type="GO" id="GO:0007338">
    <property type="term" value="P:single fertilization"/>
    <property type="evidence" value="ECO:0000315"/>
    <property type="project" value="UniProtKB"/>
</dbReference>
<dbReference type="CDD" id="cd00112">
    <property type="entry name" value="LDLa"/>
    <property type="match status" value="6"/>
</dbReference>
<dbReference type="FunFam" id="4.10.400.10:FF:000164">
    <property type="entry name" value="Basement membrane-specific heparan sulfate proteoglycan core protein-like Protein"/>
    <property type="match status" value="1"/>
</dbReference>
<dbReference type="FunFam" id="4.10.400.10:FF:000231">
    <property type="entry name" value="LDL receptor repeat-containing protein egg-1"/>
    <property type="match status" value="1"/>
</dbReference>
<dbReference type="FunFam" id="4.10.400.10:FF:000234">
    <property type="entry name" value="LDL receptor repeat-containing protein egg-1"/>
    <property type="match status" value="1"/>
</dbReference>
<dbReference type="FunFam" id="4.10.400.10:FF:000237">
    <property type="entry name" value="LDL receptor repeat-containing protein egg-1"/>
    <property type="match status" value="1"/>
</dbReference>
<dbReference type="FunFam" id="4.10.400.10:FF:000311">
    <property type="entry name" value="LDL receptor repeat-containing protein egg-1"/>
    <property type="match status" value="1"/>
</dbReference>
<dbReference type="FunFam" id="4.10.400.10:FF:000045">
    <property type="entry name" value="Low-density lipoprotein receptor-related protein 2"/>
    <property type="match status" value="1"/>
</dbReference>
<dbReference type="Gene3D" id="4.10.1220.10">
    <property type="entry name" value="EGF-type module"/>
    <property type="match status" value="1"/>
</dbReference>
<dbReference type="Gene3D" id="4.10.400.10">
    <property type="entry name" value="Low-density Lipoprotein Receptor"/>
    <property type="match status" value="7"/>
</dbReference>
<dbReference type="InterPro" id="IPR036055">
    <property type="entry name" value="LDL_receptor-like_sf"/>
</dbReference>
<dbReference type="InterPro" id="IPR051221">
    <property type="entry name" value="LDLR-related"/>
</dbReference>
<dbReference type="InterPro" id="IPR023415">
    <property type="entry name" value="LDLR_class-A_CS"/>
</dbReference>
<dbReference type="InterPro" id="IPR002172">
    <property type="entry name" value="LDrepeatLR_classA_rpt"/>
</dbReference>
<dbReference type="PANTHER" id="PTHR22722">
    <property type="entry name" value="LOW-DENSITY LIPOPROTEIN RECEPTOR-RELATED PROTEIN 2-RELATED"/>
    <property type="match status" value="1"/>
</dbReference>
<dbReference type="PANTHER" id="PTHR22722:SF14">
    <property type="entry name" value="MEGALIN, ISOFORM A"/>
    <property type="match status" value="1"/>
</dbReference>
<dbReference type="Pfam" id="PF00057">
    <property type="entry name" value="Ldl_recept_a"/>
    <property type="match status" value="7"/>
</dbReference>
<dbReference type="PRINTS" id="PR00261">
    <property type="entry name" value="LDLRECEPTOR"/>
</dbReference>
<dbReference type="SMART" id="SM00192">
    <property type="entry name" value="LDLa"/>
    <property type="match status" value="8"/>
</dbReference>
<dbReference type="SUPFAM" id="SSF57424">
    <property type="entry name" value="LDL receptor-like module"/>
    <property type="match status" value="7"/>
</dbReference>
<dbReference type="PROSITE" id="PS01209">
    <property type="entry name" value="LDLRA_1"/>
    <property type="match status" value="6"/>
</dbReference>
<dbReference type="PROSITE" id="PS50068">
    <property type="entry name" value="LDLRA_2"/>
    <property type="match status" value="7"/>
</dbReference>